<sequence length="351" mass="38577">MIPLDRLRQITERFQYLEAAMAAGDGAADIAALAKEYSDLRPVVEQISAYQQLLSDLEDAAEMLGDPDMAPLAEEEIPRLKSALPQAEAALQLALLPKDKADAKPAMLEIRPGTGGDEAALFAGDLFRMYQRYAETQGWKVDLIELQETELGGIKEVVAHIKGADVFARLKYESGVHRVQRVPSTESGGRIHTSAATVAVLPEAEDVDIHIDANDLRIDTMRSSGAGGQHVNTTDSAVRITHLPTGLVVTSSEKSQHRNREIAMQVLKARLYDLERSRVDDERSADRAAQVGSGDRSERIRTYNFPQGRMTDHRINLTLYRLDAVLQGDLDEIIDALTAHAQAQLMADMGQ</sequence>
<feature type="chain" id="PRO_0000263341" description="Peptide chain release factor 1">
    <location>
        <begin position="1"/>
        <end position="351"/>
    </location>
</feature>
<feature type="region of interest" description="Disordered" evidence="2">
    <location>
        <begin position="278"/>
        <end position="297"/>
    </location>
</feature>
<feature type="modified residue" description="N5-methylglutamine" evidence="1">
    <location>
        <position position="229"/>
    </location>
</feature>
<gene>
    <name evidence="1" type="primary">prfA</name>
    <name type="ordered locus">RD1_3127</name>
</gene>
<evidence type="ECO:0000255" key="1">
    <source>
        <dbReference type="HAMAP-Rule" id="MF_00093"/>
    </source>
</evidence>
<evidence type="ECO:0000256" key="2">
    <source>
        <dbReference type="SAM" id="MobiDB-lite"/>
    </source>
</evidence>
<keyword id="KW-0963">Cytoplasm</keyword>
<keyword id="KW-0488">Methylation</keyword>
<keyword id="KW-0648">Protein biosynthesis</keyword>
<keyword id="KW-1185">Reference proteome</keyword>
<protein>
    <recommendedName>
        <fullName evidence="1">Peptide chain release factor 1</fullName>
        <shortName evidence="1">RF-1</shortName>
    </recommendedName>
</protein>
<dbReference type="EMBL" id="CP000362">
    <property type="protein sequence ID" value="ABG32635.1"/>
    <property type="molecule type" value="Genomic_DNA"/>
</dbReference>
<dbReference type="RefSeq" id="WP_011569251.1">
    <property type="nucleotide sequence ID" value="NC_008209.1"/>
</dbReference>
<dbReference type="SMR" id="Q164F8"/>
<dbReference type="STRING" id="375451.RD1_3127"/>
<dbReference type="KEGG" id="rde:RD1_3127"/>
<dbReference type="eggNOG" id="COG0216">
    <property type="taxonomic scope" value="Bacteria"/>
</dbReference>
<dbReference type="HOGENOM" id="CLU_036856_0_1_5"/>
<dbReference type="OrthoDB" id="9806673at2"/>
<dbReference type="Proteomes" id="UP000007029">
    <property type="component" value="Chromosome"/>
</dbReference>
<dbReference type="GO" id="GO:0005737">
    <property type="term" value="C:cytoplasm"/>
    <property type="evidence" value="ECO:0007669"/>
    <property type="project" value="UniProtKB-SubCell"/>
</dbReference>
<dbReference type="GO" id="GO:0016149">
    <property type="term" value="F:translation release factor activity, codon specific"/>
    <property type="evidence" value="ECO:0007669"/>
    <property type="project" value="UniProtKB-UniRule"/>
</dbReference>
<dbReference type="FunFam" id="3.30.160.20:FF:000004">
    <property type="entry name" value="Peptide chain release factor 1"/>
    <property type="match status" value="1"/>
</dbReference>
<dbReference type="FunFam" id="3.30.70.1660:FF:000002">
    <property type="entry name" value="Peptide chain release factor 1"/>
    <property type="match status" value="1"/>
</dbReference>
<dbReference type="FunFam" id="3.30.70.1660:FF:000004">
    <property type="entry name" value="Peptide chain release factor 1"/>
    <property type="match status" value="1"/>
</dbReference>
<dbReference type="Gene3D" id="3.30.160.20">
    <property type="match status" value="1"/>
</dbReference>
<dbReference type="Gene3D" id="3.30.70.1660">
    <property type="match status" value="1"/>
</dbReference>
<dbReference type="Gene3D" id="6.10.140.1950">
    <property type="match status" value="1"/>
</dbReference>
<dbReference type="HAMAP" id="MF_00093">
    <property type="entry name" value="Rel_fac_1"/>
    <property type="match status" value="1"/>
</dbReference>
<dbReference type="InterPro" id="IPR005139">
    <property type="entry name" value="PCRF"/>
</dbReference>
<dbReference type="InterPro" id="IPR000352">
    <property type="entry name" value="Pep_chain_release_fac_I"/>
</dbReference>
<dbReference type="InterPro" id="IPR045853">
    <property type="entry name" value="Pep_chain_release_fac_I_sf"/>
</dbReference>
<dbReference type="InterPro" id="IPR050057">
    <property type="entry name" value="Prokaryotic/Mito_RF"/>
</dbReference>
<dbReference type="InterPro" id="IPR004373">
    <property type="entry name" value="RF-1"/>
</dbReference>
<dbReference type="NCBIfam" id="TIGR00019">
    <property type="entry name" value="prfA"/>
    <property type="match status" value="1"/>
</dbReference>
<dbReference type="NCBIfam" id="NF001859">
    <property type="entry name" value="PRK00591.1"/>
    <property type="match status" value="1"/>
</dbReference>
<dbReference type="PANTHER" id="PTHR43804">
    <property type="entry name" value="LD18447P"/>
    <property type="match status" value="1"/>
</dbReference>
<dbReference type="PANTHER" id="PTHR43804:SF7">
    <property type="entry name" value="LD18447P"/>
    <property type="match status" value="1"/>
</dbReference>
<dbReference type="Pfam" id="PF03462">
    <property type="entry name" value="PCRF"/>
    <property type="match status" value="1"/>
</dbReference>
<dbReference type="Pfam" id="PF00472">
    <property type="entry name" value="RF-1"/>
    <property type="match status" value="1"/>
</dbReference>
<dbReference type="SMART" id="SM00937">
    <property type="entry name" value="PCRF"/>
    <property type="match status" value="1"/>
</dbReference>
<dbReference type="SUPFAM" id="SSF75620">
    <property type="entry name" value="Release factor"/>
    <property type="match status" value="1"/>
</dbReference>
<dbReference type="PROSITE" id="PS00745">
    <property type="entry name" value="RF_PROK_I"/>
    <property type="match status" value="1"/>
</dbReference>
<proteinExistence type="inferred from homology"/>
<name>RF1_ROSDO</name>
<accession>Q164F8</accession>
<organism>
    <name type="scientific">Roseobacter denitrificans (strain ATCC 33942 / OCh 114)</name>
    <name type="common">Erythrobacter sp. (strain OCh 114)</name>
    <name type="synonym">Roseobacter denitrificans</name>
    <dbReference type="NCBI Taxonomy" id="375451"/>
    <lineage>
        <taxon>Bacteria</taxon>
        <taxon>Pseudomonadati</taxon>
        <taxon>Pseudomonadota</taxon>
        <taxon>Alphaproteobacteria</taxon>
        <taxon>Rhodobacterales</taxon>
        <taxon>Roseobacteraceae</taxon>
        <taxon>Roseobacter</taxon>
    </lineage>
</organism>
<comment type="function">
    <text evidence="1">Peptide chain release factor 1 directs the termination of translation in response to the peptide chain termination codons UAG and UAA.</text>
</comment>
<comment type="subcellular location">
    <subcellularLocation>
        <location evidence="1">Cytoplasm</location>
    </subcellularLocation>
</comment>
<comment type="PTM">
    <text evidence="1">Methylated by PrmC. Methylation increases the termination efficiency of RF1.</text>
</comment>
<comment type="similarity">
    <text evidence="1">Belongs to the prokaryotic/mitochondrial release factor family.</text>
</comment>
<reference key="1">
    <citation type="journal article" date="2007" name="J. Bacteriol.">
        <title>The complete genome sequence of Roseobacter denitrificans reveals a mixotrophic rather than photosynthetic metabolism.</title>
        <authorList>
            <person name="Swingley W.D."/>
            <person name="Sadekar S."/>
            <person name="Mastrian S.D."/>
            <person name="Matthies H.J."/>
            <person name="Hao J."/>
            <person name="Ramos H."/>
            <person name="Acharya C.R."/>
            <person name="Conrad A.L."/>
            <person name="Taylor H.L."/>
            <person name="Dejesa L.C."/>
            <person name="Shah M.K."/>
            <person name="O'Huallachain M.E."/>
            <person name="Lince M.T."/>
            <person name="Blankenship R.E."/>
            <person name="Beatty J.T."/>
            <person name="Touchman J.W."/>
        </authorList>
    </citation>
    <scope>NUCLEOTIDE SEQUENCE [LARGE SCALE GENOMIC DNA]</scope>
    <source>
        <strain>ATCC 33942 / OCh 114</strain>
    </source>
</reference>